<reference key="1">
    <citation type="journal article" date="2010" name="PLoS ONE">
        <title>The complete genome sequence of Cupriavidus metallidurans strain CH34, a master survivalist in harsh and anthropogenic environments.</title>
        <authorList>
            <person name="Janssen P.J."/>
            <person name="Van Houdt R."/>
            <person name="Moors H."/>
            <person name="Monsieurs P."/>
            <person name="Morin N."/>
            <person name="Michaux A."/>
            <person name="Benotmane M.A."/>
            <person name="Leys N."/>
            <person name="Vallaeys T."/>
            <person name="Lapidus A."/>
            <person name="Monchy S."/>
            <person name="Medigue C."/>
            <person name="Taghavi S."/>
            <person name="McCorkle S."/>
            <person name="Dunn J."/>
            <person name="van der Lelie D."/>
            <person name="Mergeay M."/>
        </authorList>
    </citation>
    <scope>NUCLEOTIDE SEQUENCE [LARGE SCALE GENOMIC DNA]</scope>
    <source>
        <strain>ATCC 43123 / DSM 2839 / NBRC 102507 / CH34</strain>
    </source>
</reference>
<protein>
    <recommendedName>
        <fullName evidence="1">Homoserine kinase</fullName>
        <shortName evidence="1">HK</shortName>
        <shortName evidence="1">HSK</shortName>
        <ecNumber evidence="1">2.7.1.39</ecNumber>
    </recommendedName>
</protein>
<accession>Q1LK22</accession>
<comment type="catalytic activity">
    <reaction evidence="1">
        <text>L-homoserine + ATP = O-phospho-L-homoserine + ADP + H(+)</text>
        <dbReference type="Rhea" id="RHEA:13985"/>
        <dbReference type="ChEBI" id="CHEBI:15378"/>
        <dbReference type="ChEBI" id="CHEBI:30616"/>
        <dbReference type="ChEBI" id="CHEBI:57476"/>
        <dbReference type="ChEBI" id="CHEBI:57590"/>
        <dbReference type="ChEBI" id="CHEBI:456216"/>
        <dbReference type="EC" id="2.7.1.39"/>
    </reaction>
</comment>
<comment type="pathway">
    <text evidence="1">Amino-acid biosynthesis; L-threonine biosynthesis; L-threonine from L-aspartate: step 4/5.</text>
</comment>
<comment type="similarity">
    <text evidence="1">Belongs to the pseudomonas-type ThrB family.</text>
</comment>
<name>KHSE_CUPMC</name>
<keyword id="KW-0028">Amino-acid biosynthesis</keyword>
<keyword id="KW-0067">ATP-binding</keyword>
<keyword id="KW-0418">Kinase</keyword>
<keyword id="KW-0547">Nucleotide-binding</keyword>
<keyword id="KW-1185">Reference proteome</keyword>
<keyword id="KW-0791">Threonine biosynthesis</keyword>
<keyword id="KW-0808">Transferase</keyword>
<feature type="chain" id="PRO_0000300800" description="Homoserine kinase">
    <location>
        <begin position="1"/>
        <end position="328"/>
    </location>
</feature>
<sequence length="328" mass="37361">MAVFTTVSQDEIARWLLDYDLGEVRALRGIASGIENSNFFLTMEQDGVTREYVLTIFERLQFDQLPYYLHLMDHLARHGICVPAPMPARDGEILRELKGKPATIVTRLPGASQLAPQPDHCAEVGAMLARMHIAGQDYPRKQPNLRSLAWWQQTTPEITPFLDAAQRKLLTEEIAHQTAFFGSGDYAALQGGPCHCDLFRDNALFDTDSAGNHRLGGFFDFYFAGDDKWLFDLAVTVNDWCIDLATGTIDMERAQAMLRAYHAVRPLTAVEAAHWQDMLRAGALRFWVSRLWDFYLPREADMLQPHDPTHFERILRRRIDDAAALPWI</sequence>
<gene>
    <name evidence="1" type="primary">thrB</name>
    <name type="ordered locus">Rmet_2627</name>
</gene>
<dbReference type="EC" id="2.7.1.39" evidence="1"/>
<dbReference type="EMBL" id="CP000352">
    <property type="protein sequence ID" value="ABF09504.1"/>
    <property type="molecule type" value="Genomic_DNA"/>
</dbReference>
<dbReference type="RefSeq" id="WP_011517203.1">
    <property type="nucleotide sequence ID" value="NC_007973.1"/>
</dbReference>
<dbReference type="SMR" id="Q1LK22"/>
<dbReference type="STRING" id="266264.Rmet_2627"/>
<dbReference type="KEGG" id="rme:Rmet_2627"/>
<dbReference type="eggNOG" id="COG2334">
    <property type="taxonomic scope" value="Bacteria"/>
</dbReference>
<dbReference type="HOGENOM" id="CLU_053300_0_0_4"/>
<dbReference type="UniPathway" id="UPA00050">
    <property type="reaction ID" value="UER00064"/>
</dbReference>
<dbReference type="Proteomes" id="UP000002429">
    <property type="component" value="Chromosome"/>
</dbReference>
<dbReference type="GO" id="GO:0005524">
    <property type="term" value="F:ATP binding"/>
    <property type="evidence" value="ECO:0007669"/>
    <property type="project" value="UniProtKB-KW"/>
</dbReference>
<dbReference type="GO" id="GO:0004413">
    <property type="term" value="F:homoserine kinase activity"/>
    <property type="evidence" value="ECO:0007669"/>
    <property type="project" value="UniProtKB-UniRule"/>
</dbReference>
<dbReference type="GO" id="GO:0009088">
    <property type="term" value="P:threonine biosynthetic process"/>
    <property type="evidence" value="ECO:0007669"/>
    <property type="project" value="UniProtKB-UniRule"/>
</dbReference>
<dbReference type="CDD" id="cd05153">
    <property type="entry name" value="HomoserineK_II"/>
    <property type="match status" value="1"/>
</dbReference>
<dbReference type="Gene3D" id="3.90.1200.10">
    <property type="match status" value="1"/>
</dbReference>
<dbReference type="Gene3D" id="3.30.200.20">
    <property type="entry name" value="Phosphorylase Kinase, domain 1"/>
    <property type="match status" value="1"/>
</dbReference>
<dbReference type="HAMAP" id="MF_00301">
    <property type="entry name" value="Homoser_kinase_2"/>
    <property type="match status" value="1"/>
</dbReference>
<dbReference type="InterPro" id="IPR002575">
    <property type="entry name" value="Aminoglycoside_PTrfase"/>
</dbReference>
<dbReference type="InterPro" id="IPR005280">
    <property type="entry name" value="Homoserine_kinase_II"/>
</dbReference>
<dbReference type="InterPro" id="IPR011009">
    <property type="entry name" value="Kinase-like_dom_sf"/>
</dbReference>
<dbReference type="InterPro" id="IPR050249">
    <property type="entry name" value="Pseudomonas-type_ThrB"/>
</dbReference>
<dbReference type="NCBIfam" id="NF003558">
    <property type="entry name" value="PRK05231.1"/>
    <property type="match status" value="1"/>
</dbReference>
<dbReference type="NCBIfam" id="TIGR00938">
    <property type="entry name" value="thrB_alt"/>
    <property type="match status" value="1"/>
</dbReference>
<dbReference type="PANTHER" id="PTHR21064:SF6">
    <property type="entry name" value="AMINOGLYCOSIDE PHOSPHOTRANSFERASE DOMAIN-CONTAINING PROTEIN"/>
    <property type="match status" value="1"/>
</dbReference>
<dbReference type="PANTHER" id="PTHR21064">
    <property type="entry name" value="AMINOGLYCOSIDE PHOSPHOTRANSFERASE DOMAIN-CONTAINING PROTEIN-RELATED"/>
    <property type="match status" value="1"/>
</dbReference>
<dbReference type="Pfam" id="PF01636">
    <property type="entry name" value="APH"/>
    <property type="match status" value="1"/>
</dbReference>
<dbReference type="SUPFAM" id="SSF56112">
    <property type="entry name" value="Protein kinase-like (PK-like)"/>
    <property type="match status" value="1"/>
</dbReference>
<proteinExistence type="inferred from homology"/>
<evidence type="ECO:0000255" key="1">
    <source>
        <dbReference type="HAMAP-Rule" id="MF_00301"/>
    </source>
</evidence>
<organism>
    <name type="scientific">Cupriavidus metallidurans (strain ATCC 43123 / DSM 2839 / NBRC 102507 / CH34)</name>
    <name type="common">Ralstonia metallidurans</name>
    <dbReference type="NCBI Taxonomy" id="266264"/>
    <lineage>
        <taxon>Bacteria</taxon>
        <taxon>Pseudomonadati</taxon>
        <taxon>Pseudomonadota</taxon>
        <taxon>Betaproteobacteria</taxon>
        <taxon>Burkholderiales</taxon>
        <taxon>Burkholderiaceae</taxon>
        <taxon>Cupriavidus</taxon>
    </lineage>
</organism>